<evidence type="ECO:0000255" key="1">
    <source>
        <dbReference type="HAMAP-Rule" id="MF_00244"/>
    </source>
</evidence>
<feature type="chain" id="PRO_0000181390" description="Probable nicotinate-nucleotide adenylyltransferase">
    <location>
        <begin position="1"/>
        <end position="197"/>
    </location>
</feature>
<accession>Q65ZZ2</accession>
<protein>
    <recommendedName>
        <fullName evidence="1">Probable nicotinate-nucleotide adenylyltransferase</fullName>
        <ecNumber evidence="1">2.7.7.18</ecNumber>
    </recommendedName>
    <alternativeName>
        <fullName evidence="1">Deamido-NAD(+) diphosphorylase</fullName>
    </alternativeName>
    <alternativeName>
        <fullName evidence="1">Deamido-NAD(+) pyrophosphorylase</fullName>
    </alternativeName>
    <alternativeName>
        <fullName evidence="1">Nicotinate mononucleotide adenylyltransferase</fullName>
        <shortName evidence="1">NaMN adenylyltransferase</shortName>
    </alternativeName>
</protein>
<name>NADD_BORGP</name>
<organism>
    <name type="scientific">Borrelia garinii subsp. bavariensis (strain ATCC BAA-2496 / DSM 23469 / PBi)</name>
    <name type="common">Borreliella bavariensis</name>
    <dbReference type="NCBI Taxonomy" id="290434"/>
    <lineage>
        <taxon>Bacteria</taxon>
        <taxon>Pseudomonadati</taxon>
        <taxon>Spirochaetota</taxon>
        <taxon>Spirochaetia</taxon>
        <taxon>Spirochaetales</taxon>
        <taxon>Borreliaceae</taxon>
        <taxon>Borreliella</taxon>
    </lineage>
</organism>
<keyword id="KW-0067">ATP-binding</keyword>
<keyword id="KW-0520">NAD</keyword>
<keyword id="KW-0547">Nucleotide-binding</keyword>
<keyword id="KW-0548">Nucleotidyltransferase</keyword>
<keyword id="KW-0662">Pyridine nucleotide biosynthesis</keyword>
<keyword id="KW-0808">Transferase</keyword>
<comment type="function">
    <text evidence="1">Catalyzes the reversible adenylation of nicotinate mononucleotide (NaMN) to nicotinic acid adenine dinucleotide (NaAD).</text>
</comment>
<comment type="catalytic activity">
    <reaction evidence="1">
        <text>nicotinate beta-D-ribonucleotide + ATP + H(+) = deamido-NAD(+) + diphosphate</text>
        <dbReference type="Rhea" id="RHEA:22860"/>
        <dbReference type="ChEBI" id="CHEBI:15378"/>
        <dbReference type="ChEBI" id="CHEBI:30616"/>
        <dbReference type="ChEBI" id="CHEBI:33019"/>
        <dbReference type="ChEBI" id="CHEBI:57502"/>
        <dbReference type="ChEBI" id="CHEBI:58437"/>
        <dbReference type="EC" id="2.7.7.18"/>
    </reaction>
</comment>
<comment type="pathway">
    <text evidence="1">Cofactor biosynthesis; NAD(+) biosynthesis; deamido-NAD(+) from nicotinate D-ribonucleotide: step 1/1.</text>
</comment>
<comment type="similarity">
    <text evidence="1">Belongs to the NadD family.</text>
</comment>
<reference key="1">
    <citation type="journal article" date="2004" name="Nucleic Acids Res.">
        <title>Comparative analysis of the Borrelia garinii genome.</title>
        <authorList>
            <person name="Gloeckner G."/>
            <person name="Lehmann R."/>
            <person name="Romualdi A."/>
            <person name="Pradella S."/>
            <person name="Schulte-Spechtel U."/>
            <person name="Schilhabel M."/>
            <person name="Wilske B."/>
            <person name="Suehnel J."/>
            <person name="Platzer M."/>
        </authorList>
    </citation>
    <scope>NUCLEOTIDE SEQUENCE [LARGE SCALE GENOMIC DNA]</scope>
    <source>
        <strain>ATCC BAA-2496 / DSM 23469 / PBi</strain>
    </source>
</reference>
<dbReference type="EC" id="2.7.7.18" evidence="1"/>
<dbReference type="EMBL" id="CP000013">
    <property type="protein sequence ID" value="AAU07629.1"/>
    <property type="molecule type" value="Genomic_DNA"/>
</dbReference>
<dbReference type="RefSeq" id="WP_011194075.1">
    <property type="nucleotide sequence ID" value="NZ_CP028872.1"/>
</dbReference>
<dbReference type="SMR" id="Q65ZZ2"/>
<dbReference type="GeneID" id="45161581"/>
<dbReference type="KEGG" id="bga:BG0806"/>
<dbReference type="eggNOG" id="COG1057">
    <property type="taxonomic scope" value="Bacteria"/>
</dbReference>
<dbReference type="HOGENOM" id="CLU_069765_1_0_12"/>
<dbReference type="OrthoDB" id="5295945at2"/>
<dbReference type="UniPathway" id="UPA00253">
    <property type="reaction ID" value="UER00332"/>
</dbReference>
<dbReference type="Proteomes" id="UP000002276">
    <property type="component" value="Chromosome"/>
</dbReference>
<dbReference type="GO" id="GO:0005524">
    <property type="term" value="F:ATP binding"/>
    <property type="evidence" value="ECO:0007669"/>
    <property type="project" value="UniProtKB-KW"/>
</dbReference>
<dbReference type="GO" id="GO:0004515">
    <property type="term" value="F:nicotinate-nucleotide adenylyltransferase activity"/>
    <property type="evidence" value="ECO:0007669"/>
    <property type="project" value="UniProtKB-UniRule"/>
</dbReference>
<dbReference type="GO" id="GO:0009435">
    <property type="term" value="P:NAD biosynthetic process"/>
    <property type="evidence" value="ECO:0007669"/>
    <property type="project" value="UniProtKB-UniRule"/>
</dbReference>
<dbReference type="CDD" id="cd02165">
    <property type="entry name" value="NMNAT"/>
    <property type="match status" value="1"/>
</dbReference>
<dbReference type="Gene3D" id="3.40.50.620">
    <property type="entry name" value="HUPs"/>
    <property type="match status" value="1"/>
</dbReference>
<dbReference type="HAMAP" id="MF_00244">
    <property type="entry name" value="NaMN_adenylyltr"/>
    <property type="match status" value="1"/>
</dbReference>
<dbReference type="InterPro" id="IPR004821">
    <property type="entry name" value="Cyt_trans-like"/>
</dbReference>
<dbReference type="InterPro" id="IPR005248">
    <property type="entry name" value="NadD/NMNAT"/>
</dbReference>
<dbReference type="InterPro" id="IPR014729">
    <property type="entry name" value="Rossmann-like_a/b/a_fold"/>
</dbReference>
<dbReference type="NCBIfam" id="TIGR00125">
    <property type="entry name" value="cyt_tran_rel"/>
    <property type="match status" value="1"/>
</dbReference>
<dbReference type="NCBIfam" id="TIGR00482">
    <property type="entry name" value="nicotinate (nicotinamide) nucleotide adenylyltransferase"/>
    <property type="match status" value="1"/>
</dbReference>
<dbReference type="NCBIfam" id="NF000840">
    <property type="entry name" value="PRK00071.1-3"/>
    <property type="match status" value="1"/>
</dbReference>
<dbReference type="PANTHER" id="PTHR39321">
    <property type="entry name" value="NICOTINATE-NUCLEOTIDE ADENYLYLTRANSFERASE-RELATED"/>
    <property type="match status" value="1"/>
</dbReference>
<dbReference type="PANTHER" id="PTHR39321:SF3">
    <property type="entry name" value="PHOSPHOPANTETHEINE ADENYLYLTRANSFERASE"/>
    <property type="match status" value="1"/>
</dbReference>
<dbReference type="Pfam" id="PF01467">
    <property type="entry name" value="CTP_transf_like"/>
    <property type="match status" value="1"/>
</dbReference>
<dbReference type="SUPFAM" id="SSF52374">
    <property type="entry name" value="Nucleotidylyl transferase"/>
    <property type="match status" value="1"/>
</dbReference>
<sequence>MRIAILGGTYNPIHIGHIFLAKEIEFLLNIDKVIFIPTCNPAHKLISEDVTVQNRIDMLKLALENENKILIDDCDIINGGITYTVDTISCVKKKYKNDKLFLVIGDDLFQNFDSWKDPQSIVSSVDLVVAHRIYKERLKSSFKHIYIDNKIIPISSSEIRNRIANGLPVSYLLPCSVLKYIKDNNLYVKKVNICERI</sequence>
<gene>
    <name evidence="1" type="primary">nadD</name>
    <name type="ordered locus">BG0806</name>
</gene>
<proteinExistence type="inferred from homology"/>